<gene>
    <name type="ordered locus">M1627_1408</name>
</gene>
<proteinExistence type="inferred from homology"/>
<sequence length="89" mass="9820">MSMPYDNEAKIKQAVILLQKIVNDTSVPRNIRRAATDAIRNLQDLGLSPAVRAANAIGILEDISQDPNMPTHARISIWNVVSILETVKD</sequence>
<dbReference type="EMBL" id="CP001401">
    <property type="protein sequence ID" value="ACP55291.1"/>
    <property type="molecule type" value="Genomic_DNA"/>
</dbReference>
<dbReference type="RefSeq" id="WP_010923074.1">
    <property type="nucleotide sequence ID" value="NC_012632.1"/>
</dbReference>
<dbReference type="SMR" id="C3N5L6"/>
<dbReference type="KEGG" id="sim:M1627_1408"/>
<dbReference type="HOGENOM" id="CLU_165882_0_0_2"/>
<dbReference type="Proteomes" id="UP000002307">
    <property type="component" value="Chromosome"/>
</dbReference>
<dbReference type="Gene3D" id="1.20.1440.50">
    <property type="entry name" value="Ta0600-like"/>
    <property type="match status" value="1"/>
</dbReference>
<dbReference type="HAMAP" id="MF_00342">
    <property type="entry name" value="UPF0147"/>
    <property type="match status" value="1"/>
</dbReference>
<dbReference type="InterPro" id="IPR023130">
    <property type="entry name" value="Ta0600-like_sf"/>
</dbReference>
<dbReference type="InterPro" id="IPR005354">
    <property type="entry name" value="UPF0147"/>
</dbReference>
<dbReference type="NCBIfam" id="NF003319">
    <property type="entry name" value="PRK04330.1"/>
    <property type="match status" value="1"/>
</dbReference>
<dbReference type="Pfam" id="PF03685">
    <property type="entry name" value="UPF0147"/>
    <property type="match status" value="1"/>
</dbReference>
<dbReference type="SUPFAM" id="SSF158436">
    <property type="entry name" value="Ta0600-like"/>
    <property type="match status" value="1"/>
</dbReference>
<protein>
    <recommendedName>
        <fullName evidence="1">UPF0147 protein M1627_1408</fullName>
    </recommendedName>
</protein>
<comment type="similarity">
    <text evidence="1">Belongs to the UPF0147 family.</text>
</comment>
<organism>
    <name type="scientific">Saccharolobus islandicus (strain M.16.27)</name>
    <name type="common">Sulfolobus islandicus</name>
    <dbReference type="NCBI Taxonomy" id="427318"/>
    <lineage>
        <taxon>Archaea</taxon>
        <taxon>Thermoproteota</taxon>
        <taxon>Thermoprotei</taxon>
        <taxon>Sulfolobales</taxon>
        <taxon>Sulfolobaceae</taxon>
        <taxon>Saccharolobus</taxon>
    </lineage>
</organism>
<evidence type="ECO:0000255" key="1">
    <source>
        <dbReference type="HAMAP-Rule" id="MF_00342"/>
    </source>
</evidence>
<reference key="1">
    <citation type="journal article" date="2009" name="Proc. Natl. Acad. Sci. U.S.A.">
        <title>Biogeography of the Sulfolobus islandicus pan-genome.</title>
        <authorList>
            <person name="Reno M.L."/>
            <person name="Held N.L."/>
            <person name="Fields C.J."/>
            <person name="Burke P.V."/>
            <person name="Whitaker R.J."/>
        </authorList>
    </citation>
    <scope>NUCLEOTIDE SEQUENCE [LARGE SCALE GENOMIC DNA]</scope>
    <source>
        <strain>M.16.27</strain>
    </source>
</reference>
<name>Y1408_SACI3</name>
<accession>C3N5L6</accession>
<feature type="chain" id="PRO_1000205276" description="UPF0147 protein M1627_1408">
    <location>
        <begin position="1"/>
        <end position="89"/>
    </location>
</feature>